<reference key="1">
    <citation type="journal article" date="2006" name="J. Bacteriol.">
        <title>Complete genome sequence of Yersinia pestis strains Antiqua and Nepal516: evidence of gene reduction in an emerging pathogen.</title>
        <authorList>
            <person name="Chain P.S.G."/>
            <person name="Hu P."/>
            <person name="Malfatti S.A."/>
            <person name="Radnedge L."/>
            <person name="Larimer F."/>
            <person name="Vergez L.M."/>
            <person name="Worsham P."/>
            <person name="Chu M.C."/>
            <person name="Andersen G.L."/>
        </authorList>
    </citation>
    <scope>NUCLEOTIDE SEQUENCE [LARGE SCALE GENOMIC DNA]</scope>
    <source>
        <strain>Antiqua</strain>
    </source>
</reference>
<sequence length="727" mass="84135">MSVLPDRQVINQLISGHYGDPFSILGMHETSQGLQICALLPDAREVWLVETENGRRIAQLTLEDPRGFFIAQLTRRKKSFRYQFAVTWQENPQIIEDPYRFGPLLQDIDSWLLAEGTHLRPYERLGAHLMSLDGVSGVSFAVWAPNAQRVSVVGDFNFWDGRRHPMRLRRENGIWELFLPGIEAGQLYKFEIIDCHGQVRLKADPYAFEAQMRPETASLISPLPDVVKSSAARQKANDLCSPVSIYEVHLGSWRRHTDNNFWLSYRELADQLVEYVKYMGFTHVELLPINEHPFDGSWGYQPLGLYAPTRRYGTPEDFKAFVAKFHQAGINVILDWVPGHFPSDEHGLSTFDGTALYEYADPREGYHQDWNTLIYNYGRNEVRNYLAGNAFYWMERFGIDALRIDAVASMIYRDYSRAEGQWVPNYYGGRENLEAIAFLRYTNKTIGVERPGSVTMAEESTDFPGVTLPPDIGGLGFNYKWNMGWMHDTLNYMQCDPVHRKYHHNLMTFGMLYAYTENFILPLSHDEVVHGKRSILDRMPGDAWQKFANLRAYYAFMWAHPGKKLLFMGCEFAQGREWNFETSLDWHLLDDENGWHSGVQRLVRDLNHCYRQYAPLYEWDYQPAGFEWLVVDDHENSVFAFLRRDAEGHELIAISNFTPVPRYHYRVGIPQGGHYREVLNSDSAFYCGSNLGNQGGIDSHHVRSHNHEHSLLLTLPPLATIYLLREN</sequence>
<gene>
    <name evidence="1" type="primary">glgB</name>
    <name type="ordered locus">YPA_3771</name>
</gene>
<accession>Q1C1D9</accession>
<dbReference type="EC" id="2.4.1.18" evidence="1"/>
<dbReference type="EMBL" id="CP000308">
    <property type="protein sequence ID" value="ABG15733.1"/>
    <property type="molecule type" value="Genomic_DNA"/>
</dbReference>
<dbReference type="RefSeq" id="WP_002209500.1">
    <property type="nucleotide sequence ID" value="NZ_CP009906.1"/>
</dbReference>
<dbReference type="SMR" id="Q1C1D9"/>
<dbReference type="CAZy" id="CBM48">
    <property type="family name" value="Carbohydrate-Binding Module Family 48"/>
</dbReference>
<dbReference type="CAZy" id="GH13">
    <property type="family name" value="Glycoside Hydrolase Family 13"/>
</dbReference>
<dbReference type="GeneID" id="57974762"/>
<dbReference type="KEGG" id="ypa:YPA_3771"/>
<dbReference type="UniPathway" id="UPA00164"/>
<dbReference type="Proteomes" id="UP000001971">
    <property type="component" value="Chromosome"/>
</dbReference>
<dbReference type="GO" id="GO:0005829">
    <property type="term" value="C:cytosol"/>
    <property type="evidence" value="ECO:0007669"/>
    <property type="project" value="TreeGrafter"/>
</dbReference>
<dbReference type="GO" id="GO:0003844">
    <property type="term" value="F:1,4-alpha-glucan branching enzyme activity"/>
    <property type="evidence" value="ECO:0007669"/>
    <property type="project" value="UniProtKB-UniRule"/>
</dbReference>
<dbReference type="GO" id="GO:0043169">
    <property type="term" value="F:cation binding"/>
    <property type="evidence" value="ECO:0007669"/>
    <property type="project" value="InterPro"/>
</dbReference>
<dbReference type="GO" id="GO:0004553">
    <property type="term" value="F:hydrolase activity, hydrolyzing O-glycosyl compounds"/>
    <property type="evidence" value="ECO:0007669"/>
    <property type="project" value="InterPro"/>
</dbReference>
<dbReference type="GO" id="GO:0005978">
    <property type="term" value="P:glycogen biosynthetic process"/>
    <property type="evidence" value="ECO:0007669"/>
    <property type="project" value="UniProtKB-UniRule"/>
</dbReference>
<dbReference type="CDD" id="cd11322">
    <property type="entry name" value="AmyAc_Glg_BE"/>
    <property type="match status" value="1"/>
</dbReference>
<dbReference type="CDD" id="cd02855">
    <property type="entry name" value="E_set_GBE_prok_N"/>
    <property type="match status" value="1"/>
</dbReference>
<dbReference type="FunFam" id="2.60.40.10:FF:000169">
    <property type="entry name" value="1,4-alpha-glucan branching enzyme GlgB"/>
    <property type="match status" value="1"/>
</dbReference>
<dbReference type="FunFam" id="2.60.40.1180:FF:000002">
    <property type="entry name" value="1,4-alpha-glucan branching enzyme GlgB"/>
    <property type="match status" value="1"/>
</dbReference>
<dbReference type="FunFam" id="3.20.20.80:FF:000003">
    <property type="entry name" value="1,4-alpha-glucan branching enzyme GlgB"/>
    <property type="match status" value="1"/>
</dbReference>
<dbReference type="Gene3D" id="3.20.20.80">
    <property type="entry name" value="Glycosidases"/>
    <property type="match status" value="1"/>
</dbReference>
<dbReference type="Gene3D" id="2.60.40.1180">
    <property type="entry name" value="Golgi alpha-mannosidase II"/>
    <property type="match status" value="1"/>
</dbReference>
<dbReference type="Gene3D" id="2.60.40.10">
    <property type="entry name" value="Immunoglobulins"/>
    <property type="match status" value="2"/>
</dbReference>
<dbReference type="HAMAP" id="MF_00685">
    <property type="entry name" value="GlgB"/>
    <property type="match status" value="1"/>
</dbReference>
<dbReference type="InterPro" id="IPR006048">
    <property type="entry name" value="A-amylase/branching_C"/>
</dbReference>
<dbReference type="InterPro" id="IPR037439">
    <property type="entry name" value="Branching_enzy"/>
</dbReference>
<dbReference type="InterPro" id="IPR006407">
    <property type="entry name" value="GlgB"/>
</dbReference>
<dbReference type="InterPro" id="IPR054169">
    <property type="entry name" value="GlgB_N"/>
</dbReference>
<dbReference type="InterPro" id="IPR044143">
    <property type="entry name" value="GlgB_N_E_set_prok"/>
</dbReference>
<dbReference type="InterPro" id="IPR006047">
    <property type="entry name" value="Glyco_hydro_13_cat_dom"/>
</dbReference>
<dbReference type="InterPro" id="IPR004193">
    <property type="entry name" value="Glyco_hydro_13_N"/>
</dbReference>
<dbReference type="InterPro" id="IPR013780">
    <property type="entry name" value="Glyco_hydro_b"/>
</dbReference>
<dbReference type="InterPro" id="IPR017853">
    <property type="entry name" value="Glycoside_hydrolase_SF"/>
</dbReference>
<dbReference type="InterPro" id="IPR013783">
    <property type="entry name" value="Ig-like_fold"/>
</dbReference>
<dbReference type="InterPro" id="IPR014756">
    <property type="entry name" value="Ig_E-set"/>
</dbReference>
<dbReference type="NCBIfam" id="TIGR01515">
    <property type="entry name" value="branching_enzym"/>
    <property type="match status" value="1"/>
</dbReference>
<dbReference type="NCBIfam" id="NF003811">
    <property type="entry name" value="PRK05402.1"/>
    <property type="match status" value="1"/>
</dbReference>
<dbReference type="NCBIfam" id="NF008967">
    <property type="entry name" value="PRK12313.1"/>
    <property type="match status" value="1"/>
</dbReference>
<dbReference type="PANTHER" id="PTHR43651">
    <property type="entry name" value="1,4-ALPHA-GLUCAN-BRANCHING ENZYME"/>
    <property type="match status" value="1"/>
</dbReference>
<dbReference type="PANTHER" id="PTHR43651:SF3">
    <property type="entry name" value="1,4-ALPHA-GLUCAN-BRANCHING ENZYME"/>
    <property type="match status" value="1"/>
</dbReference>
<dbReference type="Pfam" id="PF00128">
    <property type="entry name" value="Alpha-amylase"/>
    <property type="match status" value="1"/>
</dbReference>
<dbReference type="Pfam" id="PF02806">
    <property type="entry name" value="Alpha-amylase_C"/>
    <property type="match status" value="1"/>
</dbReference>
<dbReference type="Pfam" id="PF02922">
    <property type="entry name" value="CBM_48"/>
    <property type="match status" value="1"/>
</dbReference>
<dbReference type="Pfam" id="PF22019">
    <property type="entry name" value="GlgB_N"/>
    <property type="match status" value="1"/>
</dbReference>
<dbReference type="PIRSF" id="PIRSF000463">
    <property type="entry name" value="GlgB"/>
    <property type="match status" value="1"/>
</dbReference>
<dbReference type="SMART" id="SM00642">
    <property type="entry name" value="Aamy"/>
    <property type="match status" value="1"/>
</dbReference>
<dbReference type="SUPFAM" id="SSF51445">
    <property type="entry name" value="(Trans)glycosidases"/>
    <property type="match status" value="1"/>
</dbReference>
<dbReference type="SUPFAM" id="SSF81296">
    <property type="entry name" value="E set domains"/>
    <property type="match status" value="2"/>
</dbReference>
<dbReference type="SUPFAM" id="SSF51011">
    <property type="entry name" value="Glycosyl hydrolase domain"/>
    <property type="match status" value="1"/>
</dbReference>
<comment type="function">
    <text evidence="1">Catalyzes the formation of the alpha-1,6-glucosidic linkages in glycogen by scission of a 1,4-alpha-linked oligosaccharide from growing alpha-1,4-glucan chains and the subsequent attachment of the oligosaccharide to the alpha-1,6 position.</text>
</comment>
<comment type="catalytic activity">
    <reaction evidence="1">
        <text>Transfers a segment of a (1-&gt;4)-alpha-D-glucan chain to a primary hydroxy group in a similar glucan chain.</text>
        <dbReference type="EC" id="2.4.1.18"/>
    </reaction>
</comment>
<comment type="pathway">
    <text evidence="1">Glycan biosynthesis; glycogen biosynthesis.</text>
</comment>
<comment type="subunit">
    <text evidence="1">Monomer.</text>
</comment>
<comment type="similarity">
    <text evidence="1">Belongs to the glycosyl hydrolase 13 family. GlgB subfamily.</text>
</comment>
<organism>
    <name type="scientific">Yersinia pestis bv. Antiqua (strain Antiqua)</name>
    <dbReference type="NCBI Taxonomy" id="360102"/>
    <lineage>
        <taxon>Bacteria</taxon>
        <taxon>Pseudomonadati</taxon>
        <taxon>Pseudomonadota</taxon>
        <taxon>Gammaproteobacteria</taxon>
        <taxon>Enterobacterales</taxon>
        <taxon>Yersiniaceae</taxon>
        <taxon>Yersinia</taxon>
    </lineage>
</organism>
<evidence type="ECO:0000255" key="1">
    <source>
        <dbReference type="HAMAP-Rule" id="MF_00685"/>
    </source>
</evidence>
<name>GLGB_YERPA</name>
<feature type="chain" id="PRO_0000260720" description="1,4-alpha-glucan branching enzyme GlgB">
    <location>
        <begin position="1"/>
        <end position="727"/>
    </location>
</feature>
<feature type="active site" description="Nucleophile" evidence="1">
    <location>
        <position position="405"/>
    </location>
</feature>
<feature type="active site" description="Proton donor" evidence="1">
    <location>
        <position position="458"/>
    </location>
</feature>
<proteinExistence type="inferred from homology"/>
<protein>
    <recommendedName>
        <fullName evidence="1">1,4-alpha-glucan branching enzyme GlgB</fullName>
        <ecNumber evidence="1">2.4.1.18</ecNumber>
    </recommendedName>
    <alternativeName>
        <fullName evidence="1">1,4-alpha-D-glucan:1,4-alpha-D-glucan 6-glucosyl-transferase</fullName>
    </alternativeName>
    <alternativeName>
        <fullName evidence="1">Alpha-(1-&gt;4)-glucan branching enzyme</fullName>
    </alternativeName>
    <alternativeName>
        <fullName evidence="1">Glycogen branching enzyme</fullName>
        <shortName evidence="1">BE</shortName>
    </alternativeName>
</protein>
<keyword id="KW-0119">Carbohydrate metabolism</keyword>
<keyword id="KW-0320">Glycogen biosynthesis</keyword>
<keyword id="KW-0321">Glycogen metabolism</keyword>
<keyword id="KW-0328">Glycosyltransferase</keyword>
<keyword id="KW-0808">Transferase</keyword>